<proteinExistence type="inferred from homology"/>
<gene>
    <name evidence="1" type="primary">psbJ</name>
</gene>
<comment type="function">
    <text evidence="1">One of the components of the core complex of photosystem II (PSII). PSII is a light-driven water:plastoquinone oxidoreductase that uses light energy to abstract electrons from H(2)O, generating O(2) and a proton gradient subsequently used for ATP formation. It consists of a core antenna complex that captures photons, and an electron transfer chain that converts photonic excitation into a charge separation.</text>
</comment>
<comment type="subunit">
    <text evidence="1">PSII is composed of 1 copy each of membrane proteins PsbA, PsbB, PsbC, PsbD, PsbE, PsbF, PsbH, PsbI, PsbJ, PsbK, PsbL, PsbM, PsbT, PsbX, PsbY, PsbZ, Psb30/Ycf12, at least 3 peripheral proteins of the oxygen-evolving complex and a large number of cofactors. It forms dimeric complexes.</text>
</comment>
<comment type="subcellular location">
    <subcellularLocation>
        <location evidence="1">Plastid</location>
        <location evidence="1">Chloroplast thylakoid membrane</location>
        <topology evidence="1">Single-pass membrane protein</topology>
    </subcellularLocation>
</comment>
<comment type="similarity">
    <text evidence="1">Belongs to the PsbJ family.</text>
</comment>
<keyword id="KW-0150">Chloroplast</keyword>
<keyword id="KW-0472">Membrane</keyword>
<keyword id="KW-0602">Photosynthesis</keyword>
<keyword id="KW-0604">Photosystem II</keyword>
<keyword id="KW-0934">Plastid</keyword>
<keyword id="KW-0674">Reaction center</keyword>
<keyword id="KW-1185">Reference proteome</keyword>
<keyword id="KW-0793">Thylakoid</keyword>
<keyword id="KW-0812">Transmembrane</keyword>
<keyword id="KW-1133">Transmembrane helix</keyword>
<geneLocation type="chloroplast"/>
<accession>Q85FQ5</accession>
<name>PSBJ_CYAM1</name>
<evidence type="ECO:0000255" key="1">
    <source>
        <dbReference type="HAMAP-Rule" id="MF_01305"/>
    </source>
</evidence>
<organism>
    <name type="scientific">Cyanidioschyzon merolae (strain NIES-3377 / 10D)</name>
    <name type="common">Unicellular red alga</name>
    <dbReference type="NCBI Taxonomy" id="280699"/>
    <lineage>
        <taxon>Eukaryota</taxon>
        <taxon>Rhodophyta</taxon>
        <taxon>Bangiophyceae</taxon>
        <taxon>Cyanidiales</taxon>
        <taxon>Cyanidiaceae</taxon>
        <taxon>Cyanidioschyzon</taxon>
    </lineage>
</organism>
<dbReference type="EMBL" id="AB002583">
    <property type="protein sequence ID" value="BAC76290.1"/>
    <property type="molecule type" value="Genomic_DNA"/>
</dbReference>
<dbReference type="RefSeq" id="NP_849128.1">
    <property type="nucleotide sequence ID" value="NC_004799.1"/>
</dbReference>
<dbReference type="SMR" id="Q85FQ5"/>
<dbReference type="STRING" id="280699.Q85FQ5"/>
<dbReference type="EnsemblPlants" id="CMV228CT">
    <property type="protein sequence ID" value="CMV228CT"/>
    <property type="gene ID" value="CMV228C"/>
</dbReference>
<dbReference type="GeneID" id="844954"/>
<dbReference type="Gramene" id="CMV228CT">
    <property type="protein sequence ID" value="CMV228CT"/>
    <property type="gene ID" value="CMV228C"/>
</dbReference>
<dbReference type="KEGG" id="cme:CymeCp196"/>
<dbReference type="eggNOG" id="ENOG502SBI8">
    <property type="taxonomic scope" value="Eukaryota"/>
</dbReference>
<dbReference type="HOGENOM" id="CLU_215151_0_0_1"/>
<dbReference type="Proteomes" id="UP000007014">
    <property type="component" value="Chloroplast"/>
</dbReference>
<dbReference type="GO" id="GO:0009535">
    <property type="term" value="C:chloroplast thylakoid membrane"/>
    <property type="evidence" value="ECO:0007669"/>
    <property type="project" value="UniProtKB-SubCell"/>
</dbReference>
<dbReference type="GO" id="GO:0009539">
    <property type="term" value="C:photosystem II reaction center"/>
    <property type="evidence" value="ECO:0007669"/>
    <property type="project" value="InterPro"/>
</dbReference>
<dbReference type="GO" id="GO:0015979">
    <property type="term" value="P:photosynthesis"/>
    <property type="evidence" value="ECO:0007669"/>
    <property type="project" value="UniProtKB-UniRule"/>
</dbReference>
<dbReference type="Gene3D" id="6.10.250.2070">
    <property type="match status" value="1"/>
</dbReference>
<dbReference type="HAMAP" id="MF_01305">
    <property type="entry name" value="PSII_PsbJ"/>
    <property type="match status" value="1"/>
</dbReference>
<dbReference type="InterPro" id="IPR002682">
    <property type="entry name" value="PSII_PsbJ"/>
</dbReference>
<dbReference type="InterPro" id="IPR037267">
    <property type="entry name" value="PSII_PsbJ_sf"/>
</dbReference>
<dbReference type="NCBIfam" id="NF002722">
    <property type="entry name" value="PRK02565.1"/>
    <property type="match status" value="1"/>
</dbReference>
<dbReference type="PANTHER" id="PTHR34812">
    <property type="entry name" value="PHOTOSYSTEM II REACTION CENTER PROTEIN J"/>
    <property type="match status" value="1"/>
</dbReference>
<dbReference type="PANTHER" id="PTHR34812:SF3">
    <property type="entry name" value="PHOTOSYSTEM II REACTION CENTER PROTEIN J"/>
    <property type="match status" value="1"/>
</dbReference>
<dbReference type="Pfam" id="PF01788">
    <property type="entry name" value="PsbJ"/>
    <property type="match status" value="1"/>
</dbReference>
<dbReference type="SUPFAM" id="SSF161021">
    <property type="entry name" value="Photosystem II reaction center protein J, PsbJ"/>
    <property type="match status" value="1"/>
</dbReference>
<reference key="1">
    <citation type="journal article" date="2003" name="DNA Res.">
        <title>Complete sequence and analysis of the plastid genome of the unicellular red alga Cyanidioschyzon merolae.</title>
        <authorList>
            <person name="Ohta N."/>
            <person name="Matsuzaki M."/>
            <person name="Misumi O."/>
            <person name="Miyagishima S.-Y."/>
            <person name="Nozaki H."/>
            <person name="Tanaka K."/>
            <person name="Shin-i T."/>
            <person name="Kohara Y."/>
            <person name="Kuroiwa T."/>
        </authorList>
    </citation>
    <scope>NUCLEOTIDE SEQUENCE [LARGE SCALE GENOMIC DNA]</scope>
    <source>
        <strain>NIES-3377 / 10D</strain>
    </source>
</reference>
<sequence length="39" mass="3990">MASTGRIPLWLVATIGGIAVLTVLGLFFYGSYSGLGSSL</sequence>
<protein>
    <recommendedName>
        <fullName evidence="1">Photosystem II reaction center protein J</fullName>
        <shortName evidence="1">PSII-J</shortName>
    </recommendedName>
</protein>
<feature type="chain" id="PRO_0000216587" description="Photosystem II reaction center protein J">
    <location>
        <begin position="1"/>
        <end position="39"/>
    </location>
</feature>
<feature type="transmembrane region" description="Helical" evidence="1">
    <location>
        <begin position="7"/>
        <end position="27"/>
    </location>
</feature>